<name>SECA_HAHCH</name>
<accession>Q2SA01</accession>
<keyword id="KW-0067">ATP-binding</keyword>
<keyword id="KW-0997">Cell inner membrane</keyword>
<keyword id="KW-1003">Cell membrane</keyword>
<keyword id="KW-0963">Cytoplasm</keyword>
<keyword id="KW-0472">Membrane</keyword>
<keyword id="KW-0479">Metal-binding</keyword>
<keyword id="KW-0547">Nucleotide-binding</keyword>
<keyword id="KW-0653">Protein transport</keyword>
<keyword id="KW-1185">Reference proteome</keyword>
<keyword id="KW-1278">Translocase</keyword>
<keyword id="KW-0811">Translocation</keyword>
<keyword id="KW-0813">Transport</keyword>
<keyword id="KW-0862">Zinc</keyword>
<gene>
    <name evidence="1" type="primary">secA</name>
    <name type="ordered locus">HCH_05873</name>
</gene>
<sequence>MFSSIARKIFGSKNAREIKRMGKVVKRINELEESISALDEAALKAKTQEFRSRLEKGETLEQLLPEAFAVAREAGKRVMGMRHFDVQLIGGMVLHEGKIAEMRTGEGKTLVATLPVYLNALSGKGVHVVTVNDYLARRDADWMRPLYEYLGLSVGVVVSGQDGETKRAAYASDITYGTNNEFGFDYLRDNMAFSLTDKAQRGQHFAIVDEVDSILIDEARTPLIISGPAEDSSELYRKINELVPQLKKGEPPEEGQPVDGHFTVDEKSRSVELSESGHTYVEELLTKNGLLEEGDSLYAATNLGLLHHISSALRAHHLYSKDVDYIVQNGQVVIVDEHTGRTMPGRRWGEGLHQAIEAKERIKIQAESQTLASTTFQNYFRLYEKLAGMTGTADTEAFEFRQIYGLDVIVIPTNKPIKRIDYNDLVYLSVDEKFQAVIDDIKDTVTQNRPVLVGTASIEASEYLSAMLKKEGIAHNVLNAKQHEREAHVIAQAGRPGAVTIATNMAGRGTDIVLGGNWEADVAELEDPTPEQIAKIKADWQKRHDQVIAAGGLHVVGSERHESRRIDNQLRGRSGRQGDPGSTRFYLSLEDNLMRIFASDRVKNIMQALGMQKGEAIEHRMVSNAIEKAQRKVEGRNFDIRKSLLEYDDVANDQRHVVYEQRNEIMATDDISEMIDAIRGDVVSATVSQFIPPQSIAEQWNVPGLEKQLESDFGVDLPVQQWLDEDKRLHEETLREKILQAVVDSYREKEEVVGASVMRNFEKQVFLQVLDTLWKEHLSNMDLLRMGIHLRGYAQKNPKQEYKREAFELFQNMLDTIKHDVVRVICHVRVQKQEEMEELERRRREALAQQMQRAQATHPEATEEDSDAEEQAEGSDAPYVRDHKKVGRNEPCPCGSGKKYKQCHGRLE</sequence>
<evidence type="ECO:0000255" key="1">
    <source>
        <dbReference type="HAMAP-Rule" id="MF_01382"/>
    </source>
</evidence>
<evidence type="ECO:0000256" key="2">
    <source>
        <dbReference type="SAM" id="MobiDB-lite"/>
    </source>
</evidence>
<proteinExistence type="inferred from homology"/>
<protein>
    <recommendedName>
        <fullName evidence="1">Protein translocase subunit SecA</fullName>
        <ecNumber evidence="1">7.4.2.8</ecNumber>
    </recommendedName>
</protein>
<organism>
    <name type="scientific">Hahella chejuensis (strain KCTC 2396)</name>
    <dbReference type="NCBI Taxonomy" id="349521"/>
    <lineage>
        <taxon>Bacteria</taxon>
        <taxon>Pseudomonadati</taxon>
        <taxon>Pseudomonadota</taxon>
        <taxon>Gammaproteobacteria</taxon>
        <taxon>Oceanospirillales</taxon>
        <taxon>Hahellaceae</taxon>
        <taxon>Hahella</taxon>
    </lineage>
</organism>
<reference key="1">
    <citation type="journal article" date="2005" name="Nucleic Acids Res.">
        <title>Genomic blueprint of Hahella chejuensis, a marine microbe producing an algicidal agent.</title>
        <authorList>
            <person name="Jeong H."/>
            <person name="Yim J.H."/>
            <person name="Lee C."/>
            <person name="Choi S.-H."/>
            <person name="Park Y.K."/>
            <person name="Yoon S.H."/>
            <person name="Hur C.-G."/>
            <person name="Kang H.-Y."/>
            <person name="Kim D."/>
            <person name="Lee H.H."/>
            <person name="Park K.H."/>
            <person name="Park S.-H."/>
            <person name="Park H.-S."/>
            <person name="Lee H.K."/>
            <person name="Oh T.K."/>
            <person name="Kim J.F."/>
        </authorList>
    </citation>
    <scope>NUCLEOTIDE SEQUENCE [LARGE SCALE GENOMIC DNA]</scope>
    <source>
        <strain>KCTC 2396</strain>
    </source>
</reference>
<dbReference type="EC" id="7.4.2.8" evidence="1"/>
<dbReference type="EMBL" id="CP000155">
    <property type="protein sequence ID" value="ABC32523.1"/>
    <property type="molecule type" value="Genomic_DNA"/>
</dbReference>
<dbReference type="RefSeq" id="WP_011399582.1">
    <property type="nucleotide sequence ID" value="NC_007645.1"/>
</dbReference>
<dbReference type="SMR" id="Q2SA01"/>
<dbReference type="STRING" id="349521.HCH_05873"/>
<dbReference type="KEGG" id="hch:HCH_05873"/>
<dbReference type="eggNOG" id="COG0653">
    <property type="taxonomic scope" value="Bacteria"/>
</dbReference>
<dbReference type="HOGENOM" id="CLU_005314_3_0_6"/>
<dbReference type="OrthoDB" id="9805579at2"/>
<dbReference type="Proteomes" id="UP000000238">
    <property type="component" value="Chromosome"/>
</dbReference>
<dbReference type="GO" id="GO:0031522">
    <property type="term" value="C:cell envelope Sec protein transport complex"/>
    <property type="evidence" value="ECO:0007669"/>
    <property type="project" value="TreeGrafter"/>
</dbReference>
<dbReference type="GO" id="GO:0005829">
    <property type="term" value="C:cytosol"/>
    <property type="evidence" value="ECO:0007669"/>
    <property type="project" value="TreeGrafter"/>
</dbReference>
<dbReference type="GO" id="GO:0005886">
    <property type="term" value="C:plasma membrane"/>
    <property type="evidence" value="ECO:0007669"/>
    <property type="project" value="UniProtKB-SubCell"/>
</dbReference>
<dbReference type="GO" id="GO:0005524">
    <property type="term" value="F:ATP binding"/>
    <property type="evidence" value="ECO:0007669"/>
    <property type="project" value="UniProtKB-UniRule"/>
</dbReference>
<dbReference type="GO" id="GO:0046872">
    <property type="term" value="F:metal ion binding"/>
    <property type="evidence" value="ECO:0007669"/>
    <property type="project" value="UniProtKB-KW"/>
</dbReference>
<dbReference type="GO" id="GO:0008564">
    <property type="term" value="F:protein-exporting ATPase activity"/>
    <property type="evidence" value="ECO:0007669"/>
    <property type="project" value="UniProtKB-EC"/>
</dbReference>
<dbReference type="GO" id="GO:0065002">
    <property type="term" value="P:intracellular protein transmembrane transport"/>
    <property type="evidence" value="ECO:0007669"/>
    <property type="project" value="UniProtKB-UniRule"/>
</dbReference>
<dbReference type="GO" id="GO:0017038">
    <property type="term" value="P:protein import"/>
    <property type="evidence" value="ECO:0007669"/>
    <property type="project" value="InterPro"/>
</dbReference>
<dbReference type="GO" id="GO:0006605">
    <property type="term" value="P:protein targeting"/>
    <property type="evidence" value="ECO:0007669"/>
    <property type="project" value="UniProtKB-UniRule"/>
</dbReference>
<dbReference type="GO" id="GO:0043952">
    <property type="term" value="P:protein transport by the Sec complex"/>
    <property type="evidence" value="ECO:0007669"/>
    <property type="project" value="TreeGrafter"/>
</dbReference>
<dbReference type="CDD" id="cd17928">
    <property type="entry name" value="DEXDc_SecA"/>
    <property type="match status" value="1"/>
</dbReference>
<dbReference type="CDD" id="cd18803">
    <property type="entry name" value="SF2_C_secA"/>
    <property type="match status" value="1"/>
</dbReference>
<dbReference type="FunFam" id="3.40.50.300:FF:000113">
    <property type="entry name" value="Preprotein translocase subunit SecA"/>
    <property type="match status" value="1"/>
</dbReference>
<dbReference type="FunFam" id="3.90.1440.10:FF:000001">
    <property type="entry name" value="Preprotein translocase subunit SecA"/>
    <property type="match status" value="1"/>
</dbReference>
<dbReference type="FunFam" id="1.10.3060.10:FF:000003">
    <property type="entry name" value="Protein translocase subunit SecA"/>
    <property type="match status" value="1"/>
</dbReference>
<dbReference type="FunFam" id="3.40.50.300:FF:000334">
    <property type="entry name" value="Protein translocase subunit SecA"/>
    <property type="match status" value="1"/>
</dbReference>
<dbReference type="Gene3D" id="1.10.3060.10">
    <property type="entry name" value="Helical scaffold and wing domains of SecA"/>
    <property type="match status" value="1"/>
</dbReference>
<dbReference type="Gene3D" id="3.40.50.300">
    <property type="entry name" value="P-loop containing nucleotide triphosphate hydrolases"/>
    <property type="match status" value="2"/>
</dbReference>
<dbReference type="Gene3D" id="3.90.1440.10">
    <property type="entry name" value="SecA, preprotein cross-linking domain"/>
    <property type="match status" value="1"/>
</dbReference>
<dbReference type="HAMAP" id="MF_01382">
    <property type="entry name" value="SecA"/>
    <property type="match status" value="1"/>
</dbReference>
<dbReference type="InterPro" id="IPR014001">
    <property type="entry name" value="Helicase_ATP-bd"/>
</dbReference>
<dbReference type="InterPro" id="IPR001650">
    <property type="entry name" value="Helicase_C-like"/>
</dbReference>
<dbReference type="InterPro" id="IPR027417">
    <property type="entry name" value="P-loop_NTPase"/>
</dbReference>
<dbReference type="InterPro" id="IPR004027">
    <property type="entry name" value="SEC_C_motif"/>
</dbReference>
<dbReference type="InterPro" id="IPR000185">
    <property type="entry name" value="SecA"/>
</dbReference>
<dbReference type="InterPro" id="IPR020937">
    <property type="entry name" value="SecA_CS"/>
</dbReference>
<dbReference type="InterPro" id="IPR011115">
    <property type="entry name" value="SecA_DEAD"/>
</dbReference>
<dbReference type="InterPro" id="IPR014018">
    <property type="entry name" value="SecA_motor_DEAD"/>
</dbReference>
<dbReference type="InterPro" id="IPR011130">
    <property type="entry name" value="SecA_preprotein_X-link_dom"/>
</dbReference>
<dbReference type="InterPro" id="IPR044722">
    <property type="entry name" value="SecA_SF2_C"/>
</dbReference>
<dbReference type="InterPro" id="IPR011116">
    <property type="entry name" value="SecA_Wing/Scaffold"/>
</dbReference>
<dbReference type="InterPro" id="IPR036266">
    <property type="entry name" value="SecA_Wing/Scaffold_sf"/>
</dbReference>
<dbReference type="InterPro" id="IPR036670">
    <property type="entry name" value="SecA_X-link_sf"/>
</dbReference>
<dbReference type="NCBIfam" id="NF009538">
    <property type="entry name" value="PRK12904.1"/>
    <property type="match status" value="1"/>
</dbReference>
<dbReference type="NCBIfam" id="TIGR00963">
    <property type="entry name" value="secA"/>
    <property type="match status" value="1"/>
</dbReference>
<dbReference type="PANTHER" id="PTHR30612:SF0">
    <property type="entry name" value="CHLOROPLAST PROTEIN-TRANSPORTING ATPASE"/>
    <property type="match status" value="1"/>
</dbReference>
<dbReference type="PANTHER" id="PTHR30612">
    <property type="entry name" value="SECA INNER MEMBRANE COMPONENT OF SEC PROTEIN SECRETION SYSTEM"/>
    <property type="match status" value="1"/>
</dbReference>
<dbReference type="Pfam" id="PF21090">
    <property type="entry name" value="P-loop_SecA"/>
    <property type="match status" value="1"/>
</dbReference>
<dbReference type="Pfam" id="PF02810">
    <property type="entry name" value="SEC-C"/>
    <property type="match status" value="1"/>
</dbReference>
<dbReference type="Pfam" id="PF07517">
    <property type="entry name" value="SecA_DEAD"/>
    <property type="match status" value="1"/>
</dbReference>
<dbReference type="Pfam" id="PF01043">
    <property type="entry name" value="SecA_PP_bind"/>
    <property type="match status" value="1"/>
</dbReference>
<dbReference type="Pfam" id="PF07516">
    <property type="entry name" value="SecA_SW"/>
    <property type="match status" value="1"/>
</dbReference>
<dbReference type="PRINTS" id="PR00906">
    <property type="entry name" value="SECA"/>
</dbReference>
<dbReference type="SMART" id="SM00957">
    <property type="entry name" value="SecA_DEAD"/>
    <property type="match status" value="1"/>
</dbReference>
<dbReference type="SMART" id="SM00958">
    <property type="entry name" value="SecA_PP_bind"/>
    <property type="match status" value="1"/>
</dbReference>
<dbReference type="SUPFAM" id="SSF81886">
    <property type="entry name" value="Helical scaffold and wing domains of SecA"/>
    <property type="match status" value="1"/>
</dbReference>
<dbReference type="SUPFAM" id="SSF52540">
    <property type="entry name" value="P-loop containing nucleoside triphosphate hydrolases"/>
    <property type="match status" value="2"/>
</dbReference>
<dbReference type="SUPFAM" id="SSF81767">
    <property type="entry name" value="Pre-protein crosslinking domain of SecA"/>
    <property type="match status" value="1"/>
</dbReference>
<dbReference type="PROSITE" id="PS01312">
    <property type="entry name" value="SECA"/>
    <property type="match status" value="1"/>
</dbReference>
<dbReference type="PROSITE" id="PS51196">
    <property type="entry name" value="SECA_MOTOR_DEAD"/>
    <property type="match status" value="1"/>
</dbReference>
<feature type="chain" id="PRO_0000320825" description="Protein translocase subunit SecA">
    <location>
        <begin position="1"/>
        <end position="908"/>
    </location>
</feature>
<feature type="region of interest" description="Disordered" evidence="2">
    <location>
        <begin position="559"/>
        <end position="582"/>
    </location>
</feature>
<feature type="region of interest" description="Disordered" evidence="2">
    <location>
        <begin position="841"/>
        <end position="908"/>
    </location>
</feature>
<feature type="compositionally biased region" description="Basic and acidic residues" evidence="2">
    <location>
        <begin position="559"/>
        <end position="570"/>
    </location>
</feature>
<feature type="compositionally biased region" description="Low complexity" evidence="2">
    <location>
        <begin position="847"/>
        <end position="856"/>
    </location>
</feature>
<feature type="compositionally biased region" description="Acidic residues" evidence="2">
    <location>
        <begin position="862"/>
        <end position="873"/>
    </location>
</feature>
<feature type="compositionally biased region" description="Basic residues" evidence="2">
    <location>
        <begin position="898"/>
        <end position="908"/>
    </location>
</feature>
<feature type="binding site" evidence="1">
    <location>
        <position position="87"/>
    </location>
    <ligand>
        <name>ATP</name>
        <dbReference type="ChEBI" id="CHEBI:30616"/>
    </ligand>
</feature>
<feature type="binding site" evidence="1">
    <location>
        <begin position="105"/>
        <end position="109"/>
    </location>
    <ligand>
        <name>ATP</name>
        <dbReference type="ChEBI" id="CHEBI:30616"/>
    </ligand>
</feature>
<feature type="binding site" evidence="1">
    <location>
        <position position="511"/>
    </location>
    <ligand>
        <name>ATP</name>
        <dbReference type="ChEBI" id="CHEBI:30616"/>
    </ligand>
</feature>
<feature type="binding site" evidence="1">
    <location>
        <position position="892"/>
    </location>
    <ligand>
        <name>Zn(2+)</name>
        <dbReference type="ChEBI" id="CHEBI:29105"/>
    </ligand>
</feature>
<feature type="binding site" evidence="1">
    <location>
        <position position="894"/>
    </location>
    <ligand>
        <name>Zn(2+)</name>
        <dbReference type="ChEBI" id="CHEBI:29105"/>
    </ligand>
</feature>
<feature type="binding site" evidence="1">
    <location>
        <position position="903"/>
    </location>
    <ligand>
        <name>Zn(2+)</name>
        <dbReference type="ChEBI" id="CHEBI:29105"/>
    </ligand>
</feature>
<feature type="binding site" evidence="1">
    <location>
        <position position="904"/>
    </location>
    <ligand>
        <name>Zn(2+)</name>
        <dbReference type="ChEBI" id="CHEBI:29105"/>
    </ligand>
</feature>
<comment type="function">
    <text evidence="1">Part of the Sec protein translocase complex. Interacts with the SecYEG preprotein conducting channel. Has a central role in coupling the hydrolysis of ATP to the transfer of proteins into and across the cell membrane, serving both as a receptor for the preprotein-SecB complex and as an ATP-driven molecular motor driving the stepwise translocation of polypeptide chains across the membrane.</text>
</comment>
<comment type="catalytic activity">
    <reaction evidence="1">
        <text>ATP + H2O + cellular proteinSide 1 = ADP + phosphate + cellular proteinSide 2.</text>
        <dbReference type="EC" id="7.4.2.8"/>
    </reaction>
</comment>
<comment type="cofactor">
    <cofactor evidence="1">
        <name>Zn(2+)</name>
        <dbReference type="ChEBI" id="CHEBI:29105"/>
    </cofactor>
    <text evidence="1">May bind 1 zinc ion per subunit.</text>
</comment>
<comment type="subunit">
    <text evidence="1">Monomer and homodimer. Part of the essential Sec protein translocation apparatus which comprises SecA, SecYEG and auxiliary proteins SecDF-YajC and YidC.</text>
</comment>
<comment type="subcellular location">
    <subcellularLocation>
        <location evidence="1">Cell inner membrane</location>
        <topology evidence="1">Peripheral membrane protein</topology>
        <orientation evidence="1">Cytoplasmic side</orientation>
    </subcellularLocation>
    <subcellularLocation>
        <location evidence="1">Cytoplasm</location>
    </subcellularLocation>
    <text evidence="1">Distribution is 50-50.</text>
</comment>
<comment type="similarity">
    <text evidence="1">Belongs to the SecA family.</text>
</comment>